<keyword id="KW-1185">Reference proteome</keyword>
<comment type="similarity">
    <text evidence="1">Belongs to the iron-sulfur cluster assembly SufBD family.</text>
</comment>
<comment type="caution">
    <text evidence="2">Was originally (PubMed:18299247) thought to belong to the ABC transporter family. Lacks the conserved ABC domain, which is one of the features of the ABC transporter family.</text>
</comment>
<protein>
    <recommendedName>
        <fullName>Iron-sulfur cluster assembly SufBD family protein ABCI9</fullName>
    </recommendedName>
    <alternativeName>
        <fullName>ABC transporter I family member 9</fullName>
        <shortName>ABC transporter ABCI.9</shortName>
        <shortName>AtABCI9</shortName>
    </alternativeName>
</protein>
<sequence length="470" mass="53086">MASLFAIGFSKFSPQPTSDYSKLLKVFHPKPYSLKFLFLKTLNPTRFFKVRANDGTEPSDKLQQYFQNQDYDKKYGFLENIDSFTIPKGLSEETIRLISKLKKEPAWILEYRLKAYAKFLKLEEPKWSDNRYPLLDLQDMCFYSAPKKKPTLNSSDIADEADDPKLLEEFDRLDVPLTKKKKCSPKVAVDAVYNSESIAITNKEPLEKSGVIFCSISEAIRKYPDLIKKYLGRVVPSDDNYYAALNTAVFSDGSFCYIPKNTRCPMPLSSYFRMNSIENTGQFERTLIVAEEGSFVEYSEGCTAISHDKNQLHAAVVELYCAEGAEIKYSTRGLCAGDRSKISWTQVEKGFAITWKYPSVVLEGDDSVGEAENARNTSTCDSMLIGDNAAANTYPYIQVKNPSARIEHEASTSKIGEDQIFYFQQRGIDHERALAAMISGFCRDVFNKLPNEFGAEVNQLLSIKLEGSVG</sequence>
<dbReference type="EMBL" id="AB011475">
    <property type="status" value="NOT_ANNOTATED_CDS"/>
    <property type="molecule type" value="Genomic_DNA"/>
</dbReference>
<dbReference type="EMBL" id="CP002688">
    <property type="protein sequence ID" value="AED95095.1"/>
    <property type="molecule type" value="Genomic_DNA"/>
</dbReference>
<dbReference type="RefSeq" id="NP_680390.1">
    <property type="nucleotide sequence ID" value="NM_148085.1"/>
</dbReference>
<dbReference type="SMR" id="Q3E8H7"/>
<dbReference type="FunCoup" id="Q3E8H7">
    <property type="interactions" value="16"/>
</dbReference>
<dbReference type="STRING" id="3702.Q3E8H7"/>
<dbReference type="PaxDb" id="3702-AT5G44316.1"/>
<dbReference type="ProteomicsDB" id="244634"/>
<dbReference type="EnsemblPlants" id="AT5G44316.1">
    <property type="protein sequence ID" value="AT5G44316.1"/>
    <property type="gene ID" value="AT5G44316"/>
</dbReference>
<dbReference type="GeneID" id="834456"/>
<dbReference type="Gramene" id="AT5G44316.1">
    <property type="protein sequence ID" value="AT5G44316.1"/>
    <property type="gene ID" value="AT5G44316"/>
</dbReference>
<dbReference type="KEGG" id="ath:AT5G44316"/>
<dbReference type="Araport" id="AT5G44316"/>
<dbReference type="TAIR" id="AT5G44316">
    <property type="gene designation" value="ABCI9"/>
</dbReference>
<dbReference type="eggNOG" id="ENOG502QRGW">
    <property type="taxonomic scope" value="Eukaryota"/>
</dbReference>
<dbReference type="HOGENOM" id="CLU_026231_0_0_1"/>
<dbReference type="InParanoid" id="Q3E8H7"/>
<dbReference type="OMA" id="ACAAPVF"/>
<dbReference type="PhylomeDB" id="Q3E8H7"/>
<dbReference type="PRO" id="PR:Q3E8H7"/>
<dbReference type="Proteomes" id="UP000006548">
    <property type="component" value="Chromosome 5"/>
</dbReference>
<dbReference type="ExpressionAtlas" id="Q3E8H7">
    <property type="expression patterns" value="baseline and differential"/>
</dbReference>
<dbReference type="GO" id="GO:0016226">
    <property type="term" value="P:iron-sulfur cluster assembly"/>
    <property type="evidence" value="ECO:0007669"/>
    <property type="project" value="InterPro"/>
</dbReference>
<dbReference type="InterPro" id="IPR055346">
    <property type="entry name" value="Fe-S_cluster_assembly_SufBD"/>
</dbReference>
<dbReference type="InterPro" id="IPR000825">
    <property type="entry name" value="SUF_FeS_clus_asmbl_SufBD_core"/>
</dbReference>
<dbReference type="InterPro" id="IPR037284">
    <property type="entry name" value="SUF_FeS_clus_asmbl_SufBD_sf"/>
</dbReference>
<dbReference type="InterPro" id="IPR045595">
    <property type="entry name" value="SufBD_N"/>
</dbReference>
<dbReference type="PANTHER" id="PTHR30508">
    <property type="entry name" value="FES CLUSTER ASSEMBLY PROTEIN SUF"/>
    <property type="match status" value="1"/>
</dbReference>
<dbReference type="PANTHER" id="PTHR30508:SF1">
    <property type="entry name" value="UPF0051 PROTEIN ABCI8, CHLOROPLASTIC-RELATED"/>
    <property type="match status" value="1"/>
</dbReference>
<dbReference type="Pfam" id="PF01458">
    <property type="entry name" value="SUFBD_core"/>
    <property type="match status" value="2"/>
</dbReference>
<dbReference type="Pfam" id="PF19295">
    <property type="entry name" value="SufBD_N"/>
    <property type="match status" value="1"/>
</dbReference>
<dbReference type="SUPFAM" id="SSF101960">
    <property type="entry name" value="Stabilizer of iron transporter SufD"/>
    <property type="match status" value="1"/>
</dbReference>
<reference key="1">
    <citation type="journal article" date="1998" name="DNA Res.">
        <title>Structural analysis of Arabidopsis thaliana chromosome 5. V. Sequence features of the regions of 1,381,565 bp covered by twenty one physically assigned P1 and TAC clones.</title>
        <authorList>
            <person name="Kaneko T."/>
            <person name="Kotani H."/>
            <person name="Nakamura Y."/>
            <person name="Sato S."/>
            <person name="Asamizu E."/>
            <person name="Miyajima N."/>
            <person name="Tabata S."/>
        </authorList>
    </citation>
    <scope>NUCLEOTIDE SEQUENCE [LARGE SCALE GENOMIC DNA]</scope>
    <source>
        <strain>cv. Columbia</strain>
    </source>
</reference>
<reference key="2">
    <citation type="journal article" date="2017" name="Plant J.">
        <title>Araport11: a complete reannotation of the Arabidopsis thaliana reference genome.</title>
        <authorList>
            <person name="Cheng C.Y."/>
            <person name="Krishnakumar V."/>
            <person name="Chan A.P."/>
            <person name="Thibaud-Nissen F."/>
            <person name="Schobel S."/>
            <person name="Town C.D."/>
        </authorList>
    </citation>
    <scope>GENOME REANNOTATION</scope>
    <source>
        <strain>cv. Columbia</strain>
    </source>
</reference>
<reference key="3">
    <citation type="journal article" date="2008" name="Trends Plant Sci.">
        <title>Plant ABC proteins - a unified nomenclature and updated inventory.</title>
        <authorList>
            <person name="Verrier P.J."/>
            <person name="Bird D."/>
            <person name="Burla B."/>
            <person name="Dassa E."/>
            <person name="Forestier C."/>
            <person name="Geisler M."/>
            <person name="Klein M."/>
            <person name="Kolukisaoglu H.U."/>
            <person name="Lee Y."/>
            <person name="Martinoia E."/>
            <person name="Murphy A."/>
            <person name="Rea P.A."/>
            <person name="Samuels L."/>
            <person name="Schulz B."/>
            <person name="Spalding E.J."/>
            <person name="Yazaki K."/>
            <person name="Theodoulou F.L."/>
        </authorList>
    </citation>
    <scope>GENE FAMILY</scope>
    <scope>NOMENCLATURE</scope>
</reference>
<proteinExistence type="inferred from homology"/>
<gene>
    <name type="primary">ABCI9</name>
    <name type="ordered locus">At5g44316</name>
    <name type="ORF">K9L2.9</name>
</gene>
<organism>
    <name type="scientific">Arabidopsis thaliana</name>
    <name type="common">Mouse-ear cress</name>
    <dbReference type="NCBI Taxonomy" id="3702"/>
    <lineage>
        <taxon>Eukaryota</taxon>
        <taxon>Viridiplantae</taxon>
        <taxon>Streptophyta</taxon>
        <taxon>Embryophyta</taxon>
        <taxon>Tracheophyta</taxon>
        <taxon>Spermatophyta</taxon>
        <taxon>Magnoliopsida</taxon>
        <taxon>eudicotyledons</taxon>
        <taxon>Gunneridae</taxon>
        <taxon>Pentapetalae</taxon>
        <taxon>rosids</taxon>
        <taxon>malvids</taxon>
        <taxon>Brassicales</taxon>
        <taxon>Brassicaceae</taxon>
        <taxon>Camelineae</taxon>
        <taxon>Arabidopsis</taxon>
    </lineage>
</organism>
<name>AB9I_ARATH</name>
<evidence type="ECO:0000305" key="1"/>
<evidence type="ECO:0000305" key="2">
    <source>
    </source>
</evidence>
<feature type="chain" id="PRO_0000379147" description="Iron-sulfur cluster assembly SufBD family protein ABCI9">
    <location>
        <begin position="1"/>
        <end position="470"/>
    </location>
</feature>
<accession>Q3E8H7</accession>